<protein>
    <recommendedName>
        <fullName evidence="1">Carbamoyltransferase HypF</fullName>
        <ecNumber evidence="1">6.2.-.-</ecNumber>
    </recommendedName>
    <alternativeName>
        <fullName>Carbamoyl phosphate-converting enzyme HypF</fullName>
    </alternativeName>
    <alternativeName>
        <fullName>[NiFe]-hydrogenase maturation factor HypF</fullName>
        <shortName>Hydrogenase maturation protein HypF</shortName>
    </alternativeName>
</protein>
<keyword id="KW-0436">Ligase</keyword>
<keyword id="KW-0479">Metal-binding</keyword>
<keyword id="KW-0862">Zinc</keyword>
<keyword id="KW-0863">Zinc-finger</keyword>
<dbReference type="EC" id="6.2.-.-" evidence="1"/>
<dbReference type="EMBL" id="Z15087">
    <property type="protein sequence ID" value="CAA78795.1"/>
    <property type="molecule type" value="Genomic_DNA"/>
</dbReference>
<dbReference type="PIR" id="S32948">
    <property type="entry name" value="S32948"/>
</dbReference>
<dbReference type="RefSeq" id="WP_013066510.1">
    <property type="nucleotide sequence ID" value="NZ_VIBE01000017.1"/>
</dbReference>
<dbReference type="SMR" id="Q02987"/>
<dbReference type="GeneID" id="31489708"/>
<dbReference type="OMA" id="DRENTSM"/>
<dbReference type="UniPathway" id="UPA00335"/>
<dbReference type="GO" id="GO:0016743">
    <property type="term" value="F:carboxyl- or carbamoyltransferase activity"/>
    <property type="evidence" value="ECO:0007669"/>
    <property type="project" value="InterPro"/>
</dbReference>
<dbReference type="GO" id="GO:0003725">
    <property type="term" value="F:double-stranded RNA binding"/>
    <property type="evidence" value="ECO:0007669"/>
    <property type="project" value="InterPro"/>
</dbReference>
<dbReference type="GO" id="GO:0016874">
    <property type="term" value="F:ligase activity"/>
    <property type="evidence" value="ECO:0007669"/>
    <property type="project" value="UniProtKB-KW"/>
</dbReference>
<dbReference type="GO" id="GO:0008270">
    <property type="term" value="F:zinc ion binding"/>
    <property type="evidence" value="ECO:0007669"/>
    <property type="project" value="UniProtKB-KW"/>
</dbReference>
<dbReference type="GO" id="GO:0051604">
    <property type="term" value="P:protein maturation"/>
    <property type="evidence" value="ECO:0007669"/>
    <property type="project" value="TreeGrafter"/>
</dbReference>
<dbReference type="Gene3D" id="3.30.110.120">
    <property type="match status" value="1"/>
</dbReference>
<dbReference type="Gene3D" id="3.30.420.360">
    <property type="match status" value="1"/>
</dbReference>
<dbReference type="Gene3D" id="3.30.420.40">
    <property type="match status" value="1"/>
</dbReference>
<dbReference type="Gene3D" id="3.90.870.50">
    <property type="match status" value="1"/>
</dbReference>
<dbReference type="InterPro" id="IPR001792">
    <property type="entry name" value="Acylphosphatase-like_dom"/>
</dbReference>
<dbReference type="InterPro" id="IPR036046">
    <property type="entry name" value="Acylphosphatase-like_dom_sf"/>
</dbReference>
<dbReference type="InterPro" id="IPR017968">
    <property type="entry name" value="Acylphosphatase_CS"/>
</dbReference>
<dbReference type="InterPro" id="IPR051060">
    <property type="entry name" value="Carbamoyltrans_HypF-like"/>
</dbReference>
<dbReference type="InterPro" id="IPR004421">
    <property type="entry name" value="Carbamoyltransferase_HypF"/>
</dbReference>
<dbReference type="InterPro" id="IPR017945">
    <property type="entry name" value="DHBP_synth_RibB-like_a/b_dom"/>
</dbReference>
<dbReference type="InterPro" id="IPR041440">
    <property type="entry name" value="HypF_C"/>
</dbReference>
<dbReference type="InterPro" id="IPR055128">
    <property type="entry name" value="HypF_C_2"/>
</dbReference>
<dbReference type="InterPro" id="IPR006070">
    <property type="entry name" value="Sua5-like_dom"/>
</dbReference>
<dbReference type="InterPro" id="IPR011125">
    <property type="entry name" value="Znf_HypF"/>
</dbReference>
<dbReference type="NCBIfam" id="TIGR00143">
    <property type="entry name" value="hypF"/>
    <property type="match status" value="1"/>
</dbReference>
<dbReference type="PANTHER" id="PTHR42959">
    <property type="entry name" value="CARBAMOYLTRANSFERASE"/>
    <property type="match status" value="1"/>
</dbReference>
<dbReference type="PANTHER" id="PTHR42959:SF1">
    <property type="entry name" value="CARBAMOYLTRANSFERASE HYPF"/>
    <property type="match status" value="1"/>
</dbReference>
<dbReference type="Pfam" id="PF00708">
    <property type="entry name" value="Acylphosphatase"/>
    <property type="match status" value="1"/>
</dbReference>
<dbReference type="Pfam" id="PF17788">
    <property type="entry name" value="HypF_C"/>
    <property type="match status" value="1"/>
</dbReference>
<dbReference type="Pfam" id="PF22521">
    <property type="entry name" value="HypF_C_2"/>
    <property type="match status" value="1"/>
</dbReference>
<dbReference type="Pfam" id="PF01300">
    <property type="entry name" value="Sua5_yciO_yrdC"/>
    <property type="match status" value="1"/>
</dbReference>
<dbReference type="Pfam" id="PF07503">
    <property type="entry name" value="zf-HYPF"/>
    <property type="match status" value="2"/>
</dbReference>
<dbReference type="PIRSF" id="PIRSF006256">
    <property type="entry name" value="CMPcnvr_hdrg_mat"/>
    <property type="match status" value="1"/>
</dbReference>
<dbReference type="SUPFAM" id="SSF54975">
    <property type="entry name" value="Acylphosphatase/BLUF domain-like"/>
    <property type="match status" value="1"/>
</dbReference>
<dbReference type="SUPFAM" id="SSF55821">
    <property type="entry name" value="YrdC/RibB"/>
    <property type="match status" value="1"/>
</dbReference>
<dbReference type="PROSITE" id="PS00150">
    <property type="entry name" value="ACYLPHOSPHATASE_1"/>
    <property type="match status" value="1"/>
</dbReference>
<dbReference type="PROSITE" id="PS51160">
    <property type="entry name" value="ACYLPHOSPHATASE_3"/>
    <property type="match status" value="1"/>
</dbReference>
<dbReference type="PROSITE" id="PS51163">
    <property type="entry name" value="YRDC"/>
    <property type="match status" value="1"/>
</dbReference>
<accession>Q02987</accession>
<gene>
    <name type="primary">hypF</name>
</gene>
<organism>
    <name type="scientific">Rhodobacter capsulatus</name>
    <name type="common">Rhodopseudomonas capsulata</name>
    <dbReference type="NCBI Taxonomy" id="1061"/>
    <lineage>
        <taxon>Bacteria</taxon>
        <taxon>Pseudomonadati</taxon>
        <taxon>Pseudomonadota</taxon>
        <taxon>Alphaproteobacteria</taxon>
        <taxon>Rhodobacterales</taxon>
        <taxon>Rhodobacter group</taxon>
        <taxon>Rhodobacter</taxon>
    </lineage>
</organism>
<feature type="chain" id="PRO_0000071617" description="Carbamoyltransferase HypF">
    <location>
        <begin position="1"/>
        <end position="739"/>
    </location>
</feature>
<feature type="domain" description="Acylphosphatase-like" evidence="3">
    <location>
        <begin position="3"/>
        <end position="87"/>
    </location>
</feature>
<feature type="domain" description="YrdC-like" evidence="2">
    <location>
        <begin position="193"/>
        <end position="373"/>
    </location>
</feature>
<feature type="zinc finger region" description="C4-type" evidence="1">
    <location>
        <begin position="104"/>
        <end position="128"/>
    </location>
</feature>
<feature type="zinc finger region" description="C4-type" evidence="1">
    <location>
        <begin position="153"/>
        <end position="178"/>
    </location>
</feature>
<feature type="mutagenesis site" description="In RS13 mutant; results in loss of hydrogenase activity." evidence="4">
    <location>
        <begin position="723"/>
        <end position="739"/>
    </location>
</feature>
<comment type="function">
    <text evidence="1 5">Involved in the maturation of [NiFe] hydrogenases (PubMed:9492269). Along with HypE, it catalyzes the synthesis of the CN ligands of the active site iron of [NiFe]-hydrogenases. HypF functions as a carbamoyl transferase using carbamoylphosphate as a substrate and transferring the carboxamido moiety in an ATP-dependent reaction to the thiolate of the C-terminal cysteine of HypE yielding a protein-S-carboxamide (By similarity).</text>
</comment>
<comment type="catalytic activity">
    <reaction evidence="1">
        <text>C-terminal L-cysteinyl-[HypE protein] + carbamoyl phosphate + ATP + H2O = C-terminal S-carboxamide-L-cysteinyl-[HypE protein] + AMP + phosphate + diphosphate + H(+)</text>
        <dbReference type="Rhea" id="RHEA:55636"/>
        <dbReference type="Rhea" id="RHEA-COMP:14247"/>
        <dbReference type="Rhea" id="RHEA-COMP:14392"/>
        <dbReference type="ChEBI" id="CHEBI:15377"/>
        <dbReference type="ChEBI" id="CHEBI:15378"/>
        <dbReference type="ChEBI" id="CHEBI:30616"/>
        <dbReference type="ChEBI" id="CHEBI:33019"/>
        <dbReference type="ChEBI" id="CHEBI:43474"/>
        <dbReference type="ChEBI" id="CHEBI:58228"/>
        <dbReference type="ChEBI" id="CHEBI:76913"/>
        <dbReference type="ChEBI" id="CHEBI:139126"/>
        <dbReference type="ChEBI" id="CHEBI:456215"/>
    </reaction>
</comment>
<comment type="pathway">
    <text evidence="1">Protein modification; [NiFe] hydrogenase maturation.</text>
</comment>
<comment type="similarity">
    <text evidence="6">Belongs to the carbamoyltransferase HypF family.</text>
</comment>
<sequence>MQAWRIRVRGQVQGVGFRPFVWQLARARGLRGVVLNDAEGVLIRVAGDLGDFAAALRDQAPPLARVDAVEVTAAVCDDLPEGFQIAASGAAGAETRVTPDAATCPDCLAEIRGEGRRRGYAFTNCTHCGPRFSILQSLPYDRARTTMAPFAMCPACRAEYEDPADRRFHAQPIACPDCGPRLWLEAGGAELPGDAIGLAAARLKAGEILAVKGLGGFHLACDATNADAVDLLRARKRRPAKPFALMAREEDLARIVAVSPAALAALRDPAAPIVLMPARGSLPETLAPGMAELGVMLPYTPLHHLLLDAFGGVLVMTSGNLSGAPQVIGNDEAREKLSAFADAFLMHDRAIARRLDDSVVRVDPPMVLRRARGQVPGTLPLPPGFETAPQIVAYGGQMKAALCLIKTGQALLGHHLGELDEALTWEAFLQADADYAALFDHRPQAVAVDLHPDFRASRHGAARAGRLGVPLIAVQHHHAHLAACLGENLWPKDGGKVAVIVLDGLGLGPDGTVWGGELLLGDYKGFERVAWLKPAPLIGGDRAQIEPWRNALVRLDAAGLSDLADRLFPAAPRDLARQLAAKGINAPLSSSAGRLFDAVAACLGICPMRQSYEGEAAMRLESLAADTGPVPDLPCVGGAIDPAPLFQLLAAGERPDRVAHALHASLAQAFAAEARRLIEAGQAEAVALTGGCFQNSRLATMTRNFLADQGILTQGRIPANDGGLALGQALVAAAKLESN</sequence>
<proteinExistence type="evidence at protein level"/>
<evidence type="ECO:0000250" key="1">
    <source>
        <dbReference type="UniProtKB" id="P30131"/>
    </source>
</evidence>
<evidence type="ECO:0000255" key="2">
    <source>
        <dbReference type="PROSITE-ProRule" id="PRU00518"/>
    </source>
</evidence>
<evidence type="ECO:0000255" key="3">
    <source>
        <dbReference type="PROSITE-ProRule" id="PRU00520"/>
    </source>
</evidence>
<evidence type="ECO:0000269" key="4">
    <source>
    </source>
</evidence>
<evidence type="ECO:0000269" key="5">
    <source>
    </source>
</evidence>
<evidence type="ECO:0000305" key="6"/>
<reference key="1">
    <citation type="journal article" date="1993" name="Mol. Microbiol.">
        <title>Organization of the genes necessary for hydrogenase expression in Rhodobacter capsulatus. Sequence analysis and identification of two hyp regulatory mutants.</title>
        <authorList>
            <person name="Colbeau A."/>
            <person name="Richaud P."/>
            <person name="Toussaint B."/>
            <person name="Caballero F.J."/>
            <person name="Elster C."/>
            <person name="Delphin C."/>
            <person name="Smith R.L."/>
            <person name="Chabert J."/>
            <person name="Vignais P.M."/>
        </authorList>
    </citation>
    <scope>NUCLEOTIDE SEQUENCE [GENOMIC DNA]</scope>
    <scope>MUTAGENESIS OF C-TERMINUS</scope>
    <source>
        <strain>ATCC 33303 / B10</strain>
    </source>
</reference>
<reference key="2">
    <citation type="journal article" date="1998" name="Eur. J. Biochem.">
        <title>Rhodobacter capsulatus HypF is involved in regulation of hydrogenase synthesis through the HupUV proteins.</title>
        <authorList>
            <person name="Colbeau A."/>
            <person name="Elsen S."/>
            <person name="Tomiyama M."/>
            <person name="Zorin N.A."/>
            <person name="Dimon B."/>
            <person name="Vignais P.M."/>
        </authorList>
    </citation>
    <scope>FUNCTION</scope>
</reference>
<name>HYPF_RHOCA</name>